<gene>
    <name evidence="1" type="primary">znuC</name>
    <name type="ordered locus">SFV_1859</name>
</gene>
<evidence type="ECO:0000255" key="1">
    <source>
        <dbReference type="HAMAP-Rule" id="MF_01725"/>
    </source>
</evidence>
<organism>
    <name type="scientific">Shigella flexneri serotype 5b (strain 8401)</name>
    <dbReference type="NCBI Taxonomy" id="373384"/>
    <lineage>
        <taxon>Bacteria</taxon>
        <taxon>Pseudomonadati</taxon>
        <taxon>Pseudomonadota</taxon>
        <taxon>Gammaproteobacteria</taxon>
        <taxon>Enterobacterales</taxon>
        <taxon>Enterobacteriaceae</taxon>
        <taxon>Shigella</taxon>
    </lineage>
</organism>
<sequence length="251" mass="27814">MTSLVSLENVSVSFGQRRVLSDVSLELKPGKILTLLGPNGAGKSTLVRVVLGLVTPDEGVIKRNGKLRIGYVPQKLYLDTTLPLTVNRFLRLRPGTHKEDILPALKRVQAGHLINAPMQKLSGGETQRVLLARALLNCPQLLVLDEPTQGVDVNGQVALYDLIDQLRRELDCGVLMVSHDLHLVMAKTDEVLCLNHHICCSGTPEVVSLHPEFISMFGPRGAEQLGIYRHHHNHRHDLQGRIVLRRGNDRS</sequence>
<name>ZNUC_SHIF8</name>
<reference key="1">
    <citation type="journal article" date="2006" name="BMC Genomics">
        <title>Complete genome sequence of Shigella flexneri 5b and comparison with Shigella flexneri 2a.</title>
        <authorList>
            <person name="Nie H."/>
            <person name="Yang F."/>
            <person name="Zhang X."/>
            <person name="Yang J."/>
            <person name="Chen L."/>
            <person name="Wang J."/>
            <person name="Xiong Z."/>
            <person name="Peng J."/>
            <person name="Sun L."/>
            <person name="Dong J."/>
            <person name="Xue Y."/>
            <person name="Xu X."/>
            <person name="Chen S."/>
            <person name="Yao Z."/>
            <person name="Shen Y."/>
            <person name="Jin Q."/>
        </authorList>
    </citation>
    <scope>NUCLEOTIDE SEQUENCE [LARGE SCALE GENOMIC DNA]</scope>
    <source>
        <strain>8401</strain>
    </source>
</reference>
<proteinExistence type="inferred from homology"/>
<feature type="chain" id="PRO_0000281553" description="Zinc import ATP-binding protein ZnuC">
    <location>
        <begin position="1"/>
        <end position="251"/>
    </location>
</feature>
<feature type="domain" description="ABC transporter" evidence="1">
    <location>
        <begin position="5"/>
        <end position="220"/>
    </location>
</feature>
<feature type="binding site" evidence="1">
    <location>
        <begin position="37"/>
        <end position="44"/>
    </location>
    <ligand>
        <name>ATP</name>
        <dbReference type="ChEBI" id="CHEBI:30616"/>
    </ligand>
</feature>
<dbReference type="EC" id="7.2.2.20" evidence="1"/>
<dbReference type="EMBL" id="CP000266">
    <property type="protein sequence ID" value="ABF04016.1"/>
    <property type="molecule type" value="Genomic_DNA"/>
</dbReference>
<dbReference type="RefSeq" id="WP_000202992.1">
    <property type="nucleotide sequence ID" value="NC_008258.1"/>
</dbReference>
<dbReference type="SMR" id="Q0T3U8"/>
<dbReference type="KEGG" id="sfv:SFV_1859"/>
<dbReference type="HOGENOM" id="CLU_000604_1_11_6"/>
<dbReference type="Proteomes" id="UP000000659">
    <property type="component" value="Chromosome"/>
</dbReference>
<dbReference type="GO" id="GO:0005886">
    <property type="term" value="C:plasma membrane"/>
    <property type="evidence" value="ECO:0007669"/>
    <property type="project" value="UniProtKB-SubCell"/>
</dbReference>
<dbReference type="GO" id="GO:0015633">
    <property type="term" value="F:ABC-type zinc transporter activity"/>
    <property type="evidence" value="ECO:0007669"/>
    <property type="project" value="UniProtKB-EC"/>
</dbReference>
<dbReference type="GO" id="GO:0005524">
    <property type="term" value="F:ATP binding"/>
    <property type="evidence" value="ECO:0007669"/>
    <property type="project" value="UniProtKB-KW"/>
</dbReference>
<dbReference type="GO" id="GO:0016887">
    <property type="term" value="F:ATP hydrolysis activity"/>
    <property type="evidence" value="ECO:0007669"/>
    <property type="project" value="InterPro"/>
</dbReference>
<dbReference type="GO" id="GO:0010043">
    <property type="term" value="P:response to zinc ion"/>
    <property type="evidence" value="ECO:0007669"/>
    <property type="project" value="TreeGrafter"/>
</dbReference>
<dbReference type="CDD" id="cd03235">
    <property type="entry name" value="ABC_Metallic_Cations"/>
    <property type="match status" value="1"/>
</dbReference>
<dbReference type="FunFam" id="3.40.50.300:FF:000392">
    <property type="entry name" value="Zinc import ATP-binding protein ZnuC"/>
    <property type="match status" value="1"/>
</dbReference>
<dbReference type="Gene3D" id="3.40.50.300">
    <property type="entry name" value="P-loop containing nucleotide triphosphate hydrolases"/>
    <property type="match status" value="1"/>
</dbReference>
<dbReference type="InterPro" id="IPR003593">
    <property type="entry name" value="AAA+_ATPase"/>
</dbReference>
<dbReference type="InterPro" id="IPR003439">
    <property type="entry name" value="ABC_transporter-like_ATP-bd"/>
</dbReference>
<dbReference type="InterPro" id="IPR050153">
    <property type="entry name" value="Metal_Ion_Import_ABC"/>
</dbReference>
<dbReference type="InterPro" id="IPR027417">
    <property type="entry name" value="P-loop_NTPase"/>
</dbReference>
<dbReference type="NCBIfam" id="NF007090">
    <property type="entry name" value="PRK09544.1"/>
    <property type="match status" value="1"/>
</dbReference>
<dbReference type="PANTHER" id="PTHR42734">
    <property type="entry name" value="METAL TRANSPORT SYSTEM ATP-BINDING PROTEIN TM_0124-RELATED"/>
    <property type="match status" value="1"/>
</dbReference>
<dbReference type="PANTHER" id="PTHR42734:SF9">
    <property type="entry name" value="ZINC IMPORT ATP-BINDING PROTEIN ZNUC"/>
    <property type="match status" value="1"/>
</dbReference>
<dbReference type="Pfam" id="PF00005">
    <property type="entry name" value="ABC_tran"/>
    <property type="match status" value="1"/>
</dbReference>
<dbReference type="SMART" id="SM00382">
    <property type="entry name" value="AAA"/>
    <property type="match status" value="1"/>
</dbReference>
<dbReference type="SUPFAM" id="SSF52540">
    <property type="entry name" value="P-loop containing nucleoside triphosphate hydrolases"/>
    <property type="match status" value="1"/>
</dbReference>
<dbReference type="PROSITE" id="PS50893">
    <property type="entry name" value="ABC_TRANSPORTER_2"/>
    <property type="match status" value="1"/>
</dbReference>
<dbReference type="PROSITE" id="PS51298">
    <property type="entry name" value="ZNUC"/>
    <property type="match status" value="1"/>
</dbReference>
<comment type="function">
    <text evidence="1">Part of the ABC transporter complex ZnuABC involved in zinc import. Responsible for energy coupling to the transport system.</text>
</comment>
<comment type="catalytic activity">
    <reaction evidence="1">
        <text>Zn(2+)(out) + ATP(in) + H2O(in) = Zn(2+)(in) + ADP(in) + phosphate(in) + H(+)(in)</text>
        <dbReference type="Rhea" id="RHEA:29795"/>
        <dbReference type="ChEBI" id="CHEBI:15377"/>
        <dbReference type="ChEBI" id="CHEBI:15378"/>
        <dbReference type="ChEBI" id="CHEBI:29105"/>
        <dbReference type="ChEBI" id="CHEBI:30616"/>
        <dbReference type="ChEBI" id="CHEBI:43474"/>
        <dbReference type="ChEBI" id="CHEBI:456216"/>
        <dbReference type="EC" id="7.2.2.20"/>
    </reaction>
</comment>
<comment type="subunit">
    <text evidence="1">The complex is composed of two ATP-binding proteins (ZnuC), two transmembrane proteins (ZnuB) and a solute-binding protein (ZnuA).</text>
</comment>
<comment type="subcellular location">
    <subcellularLocation>
        <location evidence="1">Cell inner membrane</location>
        <topology evidence="1">Peripheral membrane protein</topology>
    </subcellularLocation>
</comment>
<comment type="similarity">
    <text evidence="1">Belongs to the ABC transporter superfamily. Zinc importer (TC 3.A.1.15.5) family.</text>
</comment>
<keyword id="KW-0067">ATP-binding</keyword>
<keyword id="KW-0997">Cell inner membrane</keyword>
<keyword id="KW-1003">Cell membrane</keyword>
<keyword id="KW-0406">Ion transport</keyword>
<keyword id="KW-0472">Membrane</keyword>
<keyword id="KW-0547">Nucleotide-binding</keyword>
<keyword id="KW-1278">Translocase</keyword>
<keyword id="KW-0813">Transport</keyword>
<keyword id="KW-0862">Zinc</keyword>
<keyword id="KW-0864">Zinc transport</keyword>
<protein>
    <recommendedName>
        <fullName evidence="1">Zinc import ATP-binding protein ZnuC</fullName>
        <ecNumber evidence="1">7.2.2.20</ecNumber>
    </recommendedName>
</protein>
<accession>Q0T3U8</accession>